<accession>P63314</accession>
<accession>P13472</accession>
<accession>Q547C6</accession>
<feature type="initiator methionine" description="Removed" evidence="2 7">
    <location>
        <position position="1"/>
    </location>
</feature>
<feature type="chain" id="PRO_0000045930" description="Thymosin beta-10">
    <location>
        <begin position="2"/>
        <end position="44"/>
    </location>
</feature>
<feature type="region of interest" description="Disordered" evidence="6">
    <location>
        <begin position="1"/>
        <end position="44"/>
    </location>
</feature>
<feature type="compositionally biased region" description="Basic and acidic residues" evidence="6">
    <location>
        <begin position="1"/>
        <end position="25"/>
    </location>
</feature>
<feature type="compositionally biased region" description="Basic and acidic residues" evidence="6">
    <location>
        <begin position="33"/>
        <end position="44"/>
    </location>
</feature>
<feature type="modified residue" description="N-acetylalanine" evidence="2">
    <location>
        <position position="2"/>
    </location>
</feature>
<feature type="modified residue" description="N6-acetyllysine" evidence="4">
    <location>
        <position position="4"/>
    </location>
</feature>
<feature type="modified residue" description="Phosphoserine" evidence="4">
    <location>
        <position position="12"/>
    </location>
</feature>
<feature type="modified residue" description="N6-acetyllysine" evidence="4">
    <location>
        <position position="15"/>
    </location>
</feature>
<feature type="modified residue" description="Phosphothreonine" evidence="5">
    <location>
        <position position="21"/>
    </location>
</feature>
<feature type="modified residue" description="Phosphothreonine" evidence="4">
    <location>
        <position position="23"/>
    </location>
</feature>
<feature type="modified residue" description="Phosphothreonine" evidence="4">
    <location>
        <position position="34"/>
    </location>
</feature>
<feature type="modified residue" description="N6-acetyllysine" evidence="4">
    <location>
        <position position="39"/>
    </location>
</feature>
<feature type="modified residue" description="Phosphoserine" evidence="3">
    <location>
        <position position="41"/>
    </location>
</feature>
<sequence>MADKPDMGEIASFDKAKLKKTETQEKNTLPTKETIEQEKRSEIS</sequence>
<protein>
    <recommendedName>
        <fullName>Thymosin beta-10</fullName>
    </recommendedName>
</protein>
<proteinExistence type="evidence at protein level"/>
<keyword id="KW-0007">Acetylation</keyword>
<keyword id="KW-0009">Actin-binding</keyword>
<keyword id="KW-0963">Cytoplasm</keyword>
<keyword id="KW-0206">Cytoskeleton</keyword>
<keyword id="KW-0903">Direct protein sequencing</keyword>
<keyword id="KW-0597">Phosphoprotein</keyword>
<keyword id="KW-1185">Reference proteome</keyword>
<organism>
    <name type="scientific">Equus caballus</name>
    <name type="common">Horse</name>
    <dbReference type="NCBI Taxonomy" id="9796"/>
    <lineage>
        <taxon>Eukaryota</taxon>
        <taxon>Metazoa</taxon>
        <taxon>Chordata</taxon>
        <taxon>Craniata</taxon>
        <taxon>Vertebrata</taxon>
        <taxon>Euteleostomi</taxon>
        <taxon>Mammalia</taxon>
        <taxon>Eutheria</taxon>
        <taxon>Laurasiatheria</taxon>
        <taxon>Perissodactyla</taxon>
        <taxon>Equidae</taxon>
        <taxon>Equus</taxon>
    </lineage>
</organism>
<gene>
    <name type="primary">TMSB10</name>
    <name type="synonym">PTMB10</name>
    <name type="synonym">THYB10</name>
</gene>
<comment type="function">
    <text evidence="1">Plays an important role in the organization of the cytoskeleton. Binds to and sequesters actin monomers (G actin) and therefore inhibits actin polymerization (By similarity).</text>
</comment>
<comment type="subcellular location">
    <subcellularLocation>
        <location>Cytoplasm</location>
        <location>Cytoskeleton</location>
    </subcellularLocation>
</comment>
<comment type="similarity">
    <text evidence="8">Belongs to the thymosin beta family.</text>
</comment>
<reference key="1">
    <citation type="submission" date="2002-04" db="EMBL/GenBank/DDBJ databases">
        <title>Equus caballus thymosin, beta 10 (TMSB10) mRNA.</title>
        <authorList>
            <person name="Takafuji V.A."/>
            <person name="Sharova L.V."/>
            <person name="Crisman M.V."/>
            <person name="Howard R.D."/>
        </authorList>
    </citation>
    <scope>NUCLEOTIDE SEQUENCE [MRNA]</scope>
</reference>
<reference key="2">
    <citation type="book" date="1993" name="Peptides 1992">
        <title>Isolation and structural identification of beta-thymosins from equine tissue: development of a specific ELISA against thymosin beta-10 (TBeta-10).</title>
        <editorList>
            <person name="Schneider C.H."/>
            <person name="Eberles A.N."/>
        </editorList>
        <authorList>
            <person name="Hoerger S."/>
            <person name="Gallert B."/>
            <person name="Kellerman J."/>
            <person name="Voelter W."/>
        </authorList>
    </citation>
    <scope>PROTEIN SEQUENCE OF 2-44</scope>
    <source>
        <tissue>Spleen</tissue>
    </source>
</reference>
<evidence type="ECO:0000250" key="1"/>
<evidence type="ECO:0000250" key="2">
    <source>
        <dbReference type="UniProtKB" id="P21752"/>
    </source>
</evidence>
<evidence type="ECO:0000250" key="3">
    <source>
        <dbReference type="UniProtKB" id="P63312"/>
    </source>
</evidence>
<evidence type="ECO:0000250" key="4">
    <source>
        <dbReference type="UniProtKB" id="P63313"/>
    </source>
</evidence>
<evidence type="ECO:0000250" key="5">
    <source>
        <dbReference type="UniProtKB" id="Q6ZWY8"/>
    </source>
</evidence>
<evidence type="ECO:0000256" key="6">
    <source>
        <dbReference type="SAM" id="MobiDB-lite"/>
    </source>
</evidence>
<evidence type="ECO:0000269" key="7">
    <source ref="2"/>
</evidence>
<evidence type="ECO:0000305" key="8"/>
<dbReference type="EMBL" id="AF506973">
    <property type="protein sequence ID" value="AAM34215.1"/>
    <property type="molecule type" value="mRNA"/>
</dbReference>
<dbReference type="RefSeq" id="NP_001075334.1">
    <property type="nucleotide sequence ID" value="NM_001081865.1"/>
</dbReference>
<dbReference type="SMR" id="P63314"/>
<dbReference type="FunCoup" id="P63314">
    <property type="interactions" value="396"/>
</dbReference>
<dbReference type="PeptideAtlas" id="P63314"/>
<dbReference type="GeneID" id="100033928"/>
<dbReference type="KEGG" id="ecb:100033928"/>
<dbReference type="CTD" id="9168"/>
<dbReference type="InParanoid" id="P63314"/>
<dbReference type="OrthoDB" id="2151618at2759"/>
<dbReference type="Proteomes" id="UP000002281">
    <property type="component" value="Unplaced"/>
</dbReference>
<dbReference type="GO" id="GO:0005737">
    <property type="term" value="C:cytoplasm"/>
    <property type="evidence" value="ECO:0000318"/>
    <property type="project" value="GO_Central"/>
</dbReference>
<dbReference type="GO" id="GO:0005856">
    <property type="term" value="C:cytoskeleton"/>
    <property type="evidence" value="ECO:0007669"/>
    <property type="project" value="UniProtKB-SubCell"/>
</dbReference>
<dbReference type="GO" id="GO:0003785">
    <property type="term" value="F:actin monomer binding"/>
    <property type="evidence" value="ECO:0000318"/>
    <property type="project" value="GO_Central"/>
</dbReference>
<dbReference type="GO" id="GO:0007015">
    <property type="term" value="P:actin filament organization"/>
    <property type="evidence" value="ECO:0007669"/>
    <property type="project" value="InterPro"/>
</dbReference>
<dbReference type="GO" id="GO:0030334">
    <property type="term" value="P:regulation of cell migration"/>
    <property type="evidence" value="ECO:0000318"/>
    <property type="project" value="GO_Central"/>
</dbReference>
<dbReference type="FunFam" id="1.20.5.520:FF:000001">
    <property type="entry name" value="Thymosin beta"/>
    <property type="match status" value="1"/>
</dbReference>
<dbReference type="Gene3D" id="1.20.5.520">
    <property type="entry name" value="Single helix bin"/>
    <property type="match status" value="1"/>
</dbReference>
<dbReference type="InterPro" id="IPR001152">
    <property type="entry name" value="Beta-thymosin"/>
</dbReference>
<dbReference type="InterPro" id="IPR038386">
    <property type="entry name" value="Beta-thymosin_sf"/>
</dbReference>
<dbReference type="PANTHER" id="PTHR12021">
    <property type="entry name" value="THYMOSIN BETA"/>
    <property type="match status" value="1"/>
</dbReference>
<dbReference type="PANTHER" id="PTHR12021:SF10">
    <property type="entry name" value="THYMOSIN BETA-10"/>
    <property type="match status" value="1"/>
</dbReference>
<dbReference type="Pfam" id="PF01290">
    <property type="entry name" value="Thymosin"/>
    <property type="match status" value="1"/>
</dbReference>
<dbReference type="PIRSF" id="PIRSF001828">
    <property type="entry name" value="Thymosin_beta"/>
    <property type="match status" value="1"/>
</dbReference>
<dbReference type="SMART" id="SM00152">
    <property type="entry name" value="THY"/>
    <property type="match status" value="1"/>
</dbReference>
<dbReference type="PROSITE" id="PS00500">
    <property type="entry name" value="THYMOSIN_B4"/>
    <property type="match status" value="1"/>
</dbReference>
<name>TYB10_HORSE</name>